<reference evidence="5" key="1">
    <citation type="journal article" date="2012" name="Peptides">
        <title>Novel antimicrobial peptides isolated from the skin secretions of Hainan odorous frog, Odorrana hainanensis.</title>
        <authorList>
            <person name="Wang H."/>
            <person name="Yu Z."/>
            <person name="Hu Y."/>
            <person name="Li F."/>
            <person name="Liu L."/>
            <person name="Zheng H."/>
            <person name="Meng H."/>
            <person name="Yang S."/>
            <person name="Yang X."/>
            <person name="Liu J."/>
        </authorList>
    </citation>
    <scope>NUCLEOTIDE SEQUENCE [MRNA]</scope>
    <source>
        <tissue evidence="3">Skin</tissue>
    </source>
</reference>
<accession>E7EKD9</accession>
<evidence type="ECO:0000250" key="1">
    <source>
        <dbReference type="UniProtKB" id="P86093"/>
    </source>
</evidence>
<evidence type="ECO:0000255" key="2"/>
<evidence type="ECO:0000269" key="3">
    <source>
    </source>
</evidence>
<evidence type="ECO:0000305" key="4">
    <source>
    </source>
</evidence>
<evidence type="ECO:0000312" key="5">
    <source>
        <dbReference type="EMBL" id="ADV36139.1"/>
    </source>
</evidence>
<sequence>MFTTKKPLLLLFFLGIISLSVCEQERDADEEDGGEVTEEEVKRAALKGCWTKSIPPKPCFGKR</sequence>
<dbReference type="EMBL" id="HQ735116">
    <property type="protein sequence ID" value="ADV36139.1"/>
    <property type="molecule type" value="mRNA"/>
</dbReference>
<dbReference type="GO" id="GO:0005576">
    <property type="term" value="C:extracellular region"/>
    <property type="evidence" value="ECO:0007669"/>
    <property type="project" value="UniProtKB-SubCell"/>
</dbReference>
<dbReference type="GO" id="GO:0050829">
    <property type="term" value="P:defense response to Gram-negative bacterium"/>
    <property type="evidence" value="ECO:0007669"/>
    <property type="project" value="UniProtKB-ARBA"/>
</dbReference>
<dbReference type="GO" id="GO:0050830">
    <property type="term" value="P:defense response to Gram-positive bacterium"/>
    <property type="evidence" value="ECO:0007669"/>
    <property type="project" value="UniProtKB-ARBA"/>
</dbReference>
<dbReference type="InterPro" id="IPR004275">
    <property type="entry name" value="Frog_antimicrobial_propeptide"/>
</dbReference>
<dbReference type="InterPro" id="IPR032019">
    <property type="entry name" value="Frog_antimicrobial_Ranidae"/>
</dbReference>
<dbReference type="Pfam" id="PF16048">
    <property type="entry name" value="Antimicrobial23"/>
    <property type="match status" value="1"/>
</dbReference>
<dbReference type="Pfam" id="PF03032">
    <property type="entry name" value="FSAP_sig_propep"/>
    <property type="match status" value="1"/>
</dbReference>
<comment type="subcellular location">
    <subcellularLocation>
        <location evidence="1">Secreted</location>
    </subcellularLocation>
</comment>
<comment type="tissue specificity">
    <text evidence="4">Expressed by the skin glands.</text>
</comment>
<comment type="similarity">
    <text evidence="2">Belongs to the frog skin active peptide (FSAP) family. Brevinin subfamily.</text>
</comment>
<feature type="signal peptide" evidence="2">
    <location>
        <begin position="1"/>
        <end position="22"/>
    </location>
</feature>
<feature type="propeptide" id="PRO_0000423428" evidence="1">
    <location>
        <begin position="23"/>
        <end position="41"/>
    </location>
</feature>
<feature type="peptide" id="PRO_0000423429" description="Odorranain-B1" evidence="1">
    <location>
        <begin position="44"/>
        <end position="63"/>
    </location>
</feature>
<proteinExistence type="inferred from homology"/>
<name>ODRB1_ODOHA</name>
<organism>
    <name type="scientific">Odorrana hainanensis</name>
    <name type="common">Odor frog</name>
    <name type="synonym">Rana hainanensis</name>
    <dbReference type="NCBI Taxonomy" id="431935"/>
    <lineage>
        <taxon>Eukaryota</taxon>
        <taxon>Metazoa</taxon>
        <taxon>Chordata</taxon>
        <taxon>Craniata</taxon>
        <taxon>Vertebrata</taxon>
        <taxon>Euteleostomi</taxon>
        <taxon>Amphibia</taxon>
        <taxon>Batrachia</taxon>
        <taxon>Anura</taxon>
        <taxon>Neobatrachia</taxon>
        <taxon>Ranoidea</taxon>
        <taxon>Ranidae</taxon>
        <taxon>Odorrana</taxon>
    </lineage>
</organism>
<keyword id="KW-0878">Amphibian defense peptide</keyword>
<keyword id="KW-0165">Cleavage on pair of basic residues</keyword>
<keyword id="KW-0964">Secreted</keyword>
<keyword id="KW-0732">Signal</keyword>
<protein>
    <recommendedName>
        <fullName evidence="5">Odorranain-B1</fullName>
    </recommendedName>
</protein>